<comment type="function">
    <text evidence="1">Component of the MICOS complex, a large protein complex of the mitochondrial inner membrane that plays crucial roles in the maintenance of crista junctions, inner membrane architecture, and formation of contact sites to the outer membrane.</text>
</comment>
<comment type="subunit">
    <text evidence="1">Component of the mitochondrial contact site and cristae organizing system (MICOS) complex.</text>
</comment>
<comment type="subcellular location">
    <subcellularLocation>
        <location evidence="1">Mitochondrion inner membrane</location>
        <topology evidence="1">Single-pass membrane protein</topology>
    </subcellularLocation>
</comment>
<comment type="similarity">
    <text evidence="3">Belongs to the MICOS complex subunit Mic12 family.</text>
</comment>
<comment type="sequence caution" evidence="3">
    <conflict type="erroneous initiation">
        <sequence resource="EMBL-CDS" id="AAS53985"/>
    </conflict>
    <text>Extended N-terminus.</text>
</comment>
<feature type="chain" id="PRO_0000399888" description="MICOS complex subunit MIC12">
    <location>
        <begin position="1"/>
        <end position="94"/>
    </location>
</feature>
<feature type="transmembrane region" description="Helical" evidence="2">
    <location>
        <begin position="7"/>
        <end position="23"/>
    </location>
</feature>
<protein>
    <recommendedName>
        <fullName>MICOS complex subunit MIC12</fullName>
    </recommendedName>
    <alternativeName>
        <fullName>Altered inheritance of mitochondria protein 5, mitochondrial</fullName>
    </alternativeName>
    <alternativeName>
        <fullName>Found in mitochondrial proteome protein 51</fullName>
    </alternativeName>
</protein>
<accession>Q752G2</accession>
<reference key="1">
    <citation type="journal article" date="2004" name="Science">
        <title>The Ashbya gossypii genome as a tool for mapping the ancient Saccharomyces cerevisiae genome.</title>
        <authorList>
            <person name="Dietrich F.S."/>
            <person name="Voegeli S."/>
            <person name="Brachat S."/>
            <person name="Lerch A."/>
            <person name="Gates K."/>
            <person name="Steiner S."/>
            <person name="Mohr C."/>
            <person name="Poehlmann R."/>
            <person name="Luedi P."/>
            <person name="Choi S."/>
            <person name="Wing R.A."/>
            <person name="Flavier A."/>
            <person name="Gaffney T.D."/>
            <person name="Philippsen P."/>
        </authorList>
    </citation>
    <scope>NUCLEOTIDE SEQUENCE [LARGE SCALE GENOMIC DNA]</scope>
    <source>
        <strain>ATCC 10895 / CBS 109.51 / FGSC 9923 / NRRL Y-1056</strain>
    </source>
</reference>
<reference key="2">
    <citation type="journal article" date="2013" name="G3 (Bethesda)">
        <title>Genomes of Ashbya fungi isolated from insects reveal four mating-type loci, numerous translocations, lack of transposons, and distinct gene duplications.</title>
        <authorList>
            <person name="Dietrich F.S."/>
            <person name="Voegeli S."/>
            <person name="Kuo S."/>
            <person name="Philippsen P."/>
        </authorList>
    </citation>
    <scope>GENOME REANNOTATION</scope>
    <source>
        <strain>ATCC 10895 / CBS 109.51 / FGSC 9923 / NRRL Y-1056</strain>
    </source>
</reference>
<sequence length="94" mass="11106">MPRLLRYGSFSVVASVLGASYYYYAVASPLYTEAEWHRVSQRTAALIDRRIDIPVPESTTERREYVVRSSKETMKDIWNEQIRSIVDWIYSWSH</sequence>
<gene>
    <name type="primary">AIM5</name>
    <name type="synonym">FMP51</name>
    <name type="ordered locus">AFR614W</name>
</gene>
<evidence type="ECO:0000250" key="1"/>
<evidence type="ECO:0000255" key="2"/>
<evidence type="ECO:0000305" key="3"/>
<name>MIC12_EREGS</name>
<dbReference type="EMBL" id="AE016819">
    <property type="protein sequence ID" value="AAS53985.1"/>
    <property type="status" value="ALT_INIT"/>
    <property type="molecule type" value="Genomic_DNA"/>
</dbReference>
<dbReference type="RefSeq" id="NP_986161.1">
    <property type="nucleotide sequence ID" value="NM_212297.1"/>
</dbReference>
<dbReference type="FunCoup" id="Q752G2">
    <property type="interactions" value="54"/>
</dbReference>
<dbReference type="STRING" id="284811.Q752G2"/>
<dbReference type="GeneID" id="4622446"/>
<dbReference type="KEGG" id="ago:AGOS_AFR614W"/>
<dbReference type="eggNOG" id="ENOG502S8MU">
    <property type="taxonomic scope" value="Eukaryota"/>
</dbReference>
<dbReference type="InParanoid" id="Q752G2"/>
<dbReference type="OrthoDB" id="4037694at2759"/>
<dbReference type="Proteomes" id="UP000000591">
    <property type="component" value="Chromosome VI"/>
</dbReference>
<dbReference type="GO" id="GO:0061617">
    <property type="term" value="C:MICOS complex"/>
    <property type="evidence" value="ECO:0007669"/>
    <property type="project" value="InterPro"/>
</dbReference>
<dbReference type="GO" id="GO:0044284">
    <property type="term" value="C:mitochondrial crista junction"/>
    <property type="evidence" value="ECO:0007669"/>
    <property type="project" value="InterPro"/>
</dbReference>
<dbReference type="GO" id="GO:0042407">
    <property type="term" value="P:cristae formation"/>
    <property type="evidence" value="ECO:0007669"/>
    <property type="project" value="InterPro"/>
</dbReference>
<dbReference type="InterPro" id="IPR031463">
    <property type="entry name" value="Mic12"/>
</dbReference>
<dbReference type="Pfam" id="PF17050">
    <property type="entry name" value="AIM5"/>
    <property type="match status" value="1"/>
</dbReference>
<proteinExistence type="inferred from homology"/>
<organism>
    <name type="scientific">Eremothecium gossypii (strain ATCC 10895 / CBS 109.51 / FGSC 9923 / NRRL Y-1056)</name>
    <name type="common">Yeast</name>
    <name type="synonym">Ashbya gossypii</name>
    <dbReference type="NCBI Taxonomy" id="284811"/>
    <lineage>
        <taxon>Eukaryota</taxon>
        <taxon>Fungi</taxon>
        <taxon>Dikarya</taxon>
        <taxon>Ascomycota</taxon>
        <taxon>Saccharomycotina</taxon>
        <taxon>Saccharomycetes</taxon>
        <taxon>Saccharomycetales</taxon>
        <taxon>Saccharomycetaceae</taxon>
        <taxon>Eremothecium</taxon>
    </lineage>
</organism>
<keyword id="KW-0472">Membrane</keyword>
<keyword id="KW-0496">Mitochondrion</keyword>
<keyword id="KW-0999">Mitochondrion inner membrane</keyword>
<keyword id="KW-1185">Reference proteome</keyword>
<keyword id="KW-0812">Transmembrane</keyword>
<keyword id="KW-1133">Transmembrane helix</keyword>